<keyword id="KW-1185">Reference proteome</keyword>
<keyword id="KW-0677">Repeat</keyword>
<keyword id="KW-0833">Ubl conjugation pathway</keyword>
<keyword id="KW-0853">WD repeat</keyword>
<feature type="chain" id="PRO_0000278463" description="WD repeat-containing protein 5B">
    <location>
        <begin position="1"/>
        <end position="330"/>
    </location>
</feature>
<feature type="repeat" description="WD 1">
    <location>
        <begin position="39"/>
        <end position="78"/>
    </location>
</feature>
<feature type="repeat" description="WD 2">
    <location>
        <begin position="81"/>
        <end position="122"/>
    </location>
</feature>
<feature type="repeat" description="WD 3">
    <location>
        <begin position="124"/>
        <end position="164"/>
    </location>
</feature>
<feature type="repeat" description="WD 4">
    <location>
        <begin position="165"/>
        <end position="204"/>
    </location>
</feature>
<feature type="repeat" description="WD 5">
    <location>
        <begin position="208"/>
        <end position="249"/>
    </location>
</feature>
<feature type="repeat" description="WD 6">
    <location>
        <begin position="252"/>
        <end position="292"/>
    </location>
</feature>
<feature type="repeat" description="WD 7">
    <location>
        <begin position="295"/>
        <end position="330"/>
    </location>
</feature>
<feature type="region of interest" description="Disordered" evidence="2">
    <location>
        <begin position="1"/>
        <end position="26"/>
    </location>
</feature>
<feature type="short sequence motif" description="DDB1-binding motif">
    <location>
        <begin position="188"/>
        <end position="192"/>
    </location>
</feature>
<feature type="compositionally biased region" description="Low complexity" evidence="2">
    <location>
        <begin position="9"/>
        <end position="23"/>
    </location>
</feature>
<reference key="1">
    <citation type="submission" date="2004-11" db="EMBL/GenBank/DDBJ databases">
        <authorList>
            <consortium name="The German cDNA consortium"/>
        </authorList>
    </citation>
    <scope>NUCLEOTIDE SEQUENCE [LARGE SCALE MRNA]</scope>
    <source>
        <tissue>Kidney</tissue>
    </source>
</reference>
<organism>
    <name type="scientific">Pongo abelii</name>
    <name type="common">Sumatran orangutan</name>
    <name type="synonym">Pongo pygmaeus abelii</name>
    <dbReference type="NCBI Taxonomy" id="9601"/>
    <lineage>
        <taxon>Eukaryota</taxon>
        <taxon>Metazoa</taxon>
        <taxon>Chordata</taxon>
        <taxon>Craniata</taxon>
        <taxon>Vertebrata</taxon>
        <taxon>Euteleostomi</taxon>
        <taxon>Mammalia</taxon>
        <taxon>Eutheria</taxon>
        <taxon>Euarchontoglires</taxon>
        <taxon>Primates</taxon>
        <taxon>Haplorrhini</taxon>
        <taxon>Catarrhini</taxon>
        <taxon>Hominidae</taxon>
        <taxon>Pongo</taxon>
    </lineage>
</organism>
<protein>
    <recommendedName>
        <fullName>WD repeat-containing protein 5B</fullName>
    </recommendedName>
</protein>
<sequence>MATKESGDAKAQLALSSSANQSKEVPENPNYALKCTLVGHTEAVSSVKFSPNGEWLASSSADRLIIIWGAYDGKYERTLYGHNLEISDVAWSSDSSRLVSASDDKTLKLWDMRSGKCLKTLKGHSNYVFCCNFNPPSNLIISGSFDETVKIWEVKTGKCLKTLSAHSDPVSAVHFNCSGSLIVSGSYDGLCRIWDAASGQCLKTLVDDDNPPVSFVKFSPNGKYILTATLDNTLKLWDYSRGRCLKTYTGHKNEKYCIFANFSVTGGKWIVSGSEDNLVYIWNLQTKEIVQKLQGHTDVVISAACHPTENLIASAALENDKTIKLWMSNH</sequence>
<proteinExistence type="evidence at transcript level"/>
<comment type="function">
    <text evidence="1">May function as a substrate receptor for CUL4-DDB1 ubiquitin E3 ligase complex.</text>
</comment>
<comment type="subunit">
    <text evidence="1">Probable part of a cullin-RING E3 protein ligase complex containing CUL4B-DDB1 and a substrate-recruiting component (DCAF). Interacts with CUL4B and DDB1 (By similarity).</text>
</comment>
<comment type="similarity">
    <text evidence="3">Belongs to the WD repeat WDR5/wds family.</text>
</comment>
<name>WDR5B_PONAB</name>
<dbReference type="EMBL" id="CR857638">
    <property type="protein sequence ID" value="CAH89912.1"/>
    <property type="molecule type" value="mRNA"/>
</dbReference>
<dbReference type="RefSeq" id="NP_001127213.1">
    <property type="nucleotide sequence ID" value="NM_001133741.1"/>
</dbReference>
<dbReference type="SMR" id="Q5RE95"/>
<dbReference type="FunCoup" id="Q5RE95">
    <property type="interactions" value="477"/>
</dbReference>
<dbReference type="STRING" id="9601.ENSPPYP00000015083"/>
<dbReference type="Ensembl" id="ENSPPYT00000015685.2">
    <property type="protein sequence ID" value="ENSPPYP00000015083.1"/>
    <property type="gene ID" value="ENSPPYG00000013484.2"/>
</dbReference>
<dbReference type="GeneID" id="100174268"/>
<dbReference type="KEGG" id="pon:100174268"/>
<dbReference type="CTD" id="54554"/>
<dbReference type="eggNOG" id="KOG0266">
    <property type="taxonomic scope" value="Eukaryota"/>
</dbReference>
<dbReference type="GeneTree" id="ENSGT00940000154143"/>
<dbReference type="HOGENOM" id="CLU_000288_57_1_1"/>
<dbReference type="InParanoid" id="Q5RE95"/>
<dbReference type="OMA" id="NYALKCT"/>
<dbReference type="OrthoDB" id="674604at2759"/>
<dbReference type="TreeFam" id="TF314125"/>
<dbReference type="Proteomes" id="UP000001595">
    <property type="component" value="Chromosome 3"/>
</dbReference>
<dbReference type="GO" id="GO:0048188">
    <property type="term" value="C:Set1C/COMPASS complex"/>
    <property type="evidence" value="ECO:0007669"/>
    <property type="project" value="TreeGrafter"/>
</dbReference>
<dbReference type="GO" id="GO:0042393">
    <property type="term" value="F:histone binding"/>
    <property type="evidence" value="ECO:0007669"/>
    <property type="project" value="TreeGrafter"/>
</dbReference>
<dbReference type="CDD" id="cd00200">
    <property type="entry name" value="WD40"/>
    <property type="match status" value="1"/>
</dbReference>
<dbReference type="FunFam" id="2.130.10.10:FF:000029">
    <property type="entry name" value="WD repeat-containing protein 5"/>
    <property type="match status" value="1"/>
</dbReference>
<dbReference type="Gene3D" id="2.130.10.10">
    <property type="entry name" value="YVTN repeat-like/Quinoprotein amine dehydrogenase"/>
    <property type="match status" value="1"/>
</dbReference>
<dbReference type="InterPro" id="IPR020472">
    <property type="entry name" value="G-protein_beta_WD-40_rep"/>
</dbReference>
<dbReference type="InterPro" id="IPR015943">
    <property type="entry name" value="WD40/YVTN_repeat-like_dom_sf"/>
</dbReference>
<dbReference type="InterPro" id="IPR019775">
    <property type="entry name" value="WD40_repeat_CS"/>
</dbReference>
<dbReference type="InterPro" id="IPR036322">
    <property type="entry name" value="WD40_repeat_dom_sf"/>
</dbReference>
<dbReference type="InterPro" id="IPR001680">
    <property type="entry name" value="WD40_rpt"/>
</dbReference>
<dbReference type="PANTHER" id="PTHR22847:SF516">
    <property type="entry name" value="WD REPEAT-CONTAINING PROTEIN 5B"/>
    <property type="match status" value="1"/>
</dbReference>
<dbReference type="PANTHER" id="PTHR22847">
    <property type="entry name" value="WD40 REPEAT PROTEIN"/>
    <property type="match status" value="1"/>
</dbReference>
<dbReference type="Pfam" id="PF25175">
    <property type="entry name" value="Beta-prop_WDR5"/>
    <property type="match status" value="1"/>
</dbReference>
<dbReference type="PIRSF" id="PIRSF002394">
    <property type="entry name" value="GN-bd_beta"/>
    <property type="match status" value="1"/>
</dbReference>
<dbReference type="PRINTS" id="PR00320">
    <property type="entry name" value="GPROTEINBRPT"/>
</dbReference>
<dbReference type="SMART" id="SM00320">
    <property type="entry name" value="WD40"/>
    <property type="match status" value="7"/>
</dbReference>
<dbReference type="SUPFAM" id="SSF50978">
    <property type="entry name" value="WD40 repeat-like"/>
    <property type="match status" value="1"/>
</dbReference>
<dbReference type="PROSITE" id="PS00678">
    <property type="entry name" value="WD_REPEATS_1"/>
    <property type="match status" value="4"/>
</dbReference>
<dbReference type="PROSITE" id="PS50082">
    <property type="entry name" value="WD_REPEATS_2"/>
    <property type="match status" value="6"/>
</dbReference>
<dbReference type="PROSITE" id="PS50294">
    <property type="entry name" value="WD_REPEATS_REGION"/>
    <property type="match status" value="1"/>
</dbReference>
<accession>Q5RE95</accession>
<evidence type="ECO:0000250" key="1"/>
<evidence type="ECO:0000256" key="2">
    <source>
        <dbReference type="SAM" id="MobiDB-lite"/>
    </source>
</evidence>
<evidence type="ECO:0000305" key="3"/>